<organism>
    <name type="scientific">Homo sapiens</name>
    <name type="common">Human</name>
    <dbReference type="NCBI Taxonomy" id="9606"/>
    <lineage>
        <taxon>Eukaryota</taxon>
        <taxon>Metazoa</taxon>
        <taxon>Chordata</taxon>
        <taxon>Craniata</taxon>
        <taxon>Vertebrata</taxon>
        <taxon>Euteleostomi</taxon>
        <taxon>Mammalia</taxon>
        <taxon>Eutheria</taxon>
        <taxon>Euarchontoglires</taxon>
        <taxon>Primates</taxon>
        <taxon>Haplorrhini</taxon>
        <taxon>Catarrhini</taxon>
        <taxon>Hominidae</taxon>
        <taxon>Homo</taxon>
    </lineage>
</organism>
<accession>Q15170</accession>
<accession>Q9UJQ9</accession>
<comment type="function">
    <text>May be involved in transcriptional regulation. Modulates various viral and cellular promoters in a promoter context-dependent manner. For example, transcription from the FOS promoter is increased, while Rous sarcoma virus (RSV) long terminal repeat (LTR) promoter activity is repressed. Does not bind DNA directly.</text>
</comment>
<comment type="interaction">
    <interactant intactId="EBI-2511314">
        <id>Q15170</id>
    </interactant>
    <interactant intactId="EBI-748961">
        <id>O95273</id>
        <label>CCNDBP1</label>
    </interactant>
    <organismsDiffer>false</organismsDiffer>
    <experiments>3</experiments>
</comment>
<comment type="subcellular location">
    <subcellularLocation>
        <location>Nucleus</location>
    </subcellularLocation>
</comment>
<comment type="tissue specificity">
    <text evidence="2">Expressed in all tissues examined. Highly expressed in heart, ovary, prostate and skeletal muscle. Moderately expressed in brain, placenta, testis and small intestine. Weakly expressed in lung, liver and spleen. Expressed in several cancer cell lines.</text>
</comment>
<comment type="PTM">
    <text evidence="4">Phosphorylation of Ser-38 and Ser-39 is critical for transcriptional repression.</text>
</comment>
<comment type="disease" evidence="3">
    <disease id="DI-06575">
        <name>Hijazi-Reis syndrome</name>
        <acronym>HIJRS</acronym>
        <description>A neurodevelopmental disorder characterized by hypotonia, abnormal gait, developmental delay, intellectual disability especially affecting expressive language, and autistic behavior. Additional features include facial dysmorphism,ocular anomalies, and gastrointestinal issues. Rare patients have seizures. Disease severity is variable. Males tend to be more severely affected than females.</description>
        <dbReference type="MIM" id="301094"/>
    </disease>
    <text>The disease is caused by variants affecting the gene represented in this entry.</text>
</comment>
<comment type="similarity">
    <text evidence="5">Belongs to the TFS-II family. TFA subfamily.</text>
</comment>
<comment type="sequence caution" evidence="5">
    <conflict type="frameshift">
        <sequence resource="EMBL-CDS" id="AAA60149"/>
    </conflict>
</comment>
<comment type="sequence caution" evidence="5">
    <conflict type="frameshift">
        <sequence resource="EMBL-CDS" id="AAD17840"/>
    </conflict>
</comment>
<evidence type="ECO:0000256" key="1">
    <source>
        <dbReference type="SAM" id="MobiDB-lite"/>
    </source>
</evidence>
<evidence type="ECO:0000269" key="2">
    <source>
    </source>
</evidence>
<evidence type="ECO:0000269" key="3">
    <source>
    </source>
</evidence>
<evidence type="ECO:0000269" key="4">
    <source>
    </source>
</evidence>
<evidence type="ECO:0000305" key="5"/>
<evidence type="ECO:0000312" key="6">
    <source>
        <dbReference type="HGNC" id="HGNC:11616"/>
    </source>
</evidence>
<evidence type="ECO:0007744" key="7">
    <source>
    </source>
</evidence>
<feature type="chain" id="PRO_0000239203" description="Transcription elongation factor A protein-like 1">
    <location>
        <begin position="1"/>
        <end position="159"/>
    </location>
</feature>
<feature type="region of interest" description="Disordered" evidence="1">
    <location>
        <begin position="1"/>
        <end position="97"/>
    </location>
</feature>
<feature type="compositionally biased region" description="Basic and acidic residues" evidence="1">
    <location>
        <begin position="17"/>
        <end position="34"/>
    </location>
</feature>
<feature type="compositionally biased region" description="Acidic residues" evidence="1">
    <location>
        <begin position="37"/>
        <end position="54"/>
    </location>
</feature>
<feature type="compositionally biased region" description="Basic and acidic residues" evidence="1">
    <location>
        <begin position="64"/>
        <end position="80"/>
    </location>
</feature>
<feature type="modified residue" description="Phosphoserine" evidence="7">
    <location>
        <position position="28"/>
    </location>
</feature>
<feature type="modified residue" description="Phosphoserine" evidence="4">
    <location>
        <position position="33"/>
    </location>
</feature>
<feature type="modified residue" description="Phosphoserine" evidence="4">
    <location>
        <position position="38"/>
    </location>
</feature>
<feature type="modified residue" description="Phosphoserine" evidence="4">
    <location>
        <position position="39"/>
    </location>
</feature>
<feature type="modified residue" description="Phosphoserine" evidence="4">
    <location>
        <position position="43"/>
    </location>
</feature>
<feature type="modified residue" description="Phosphoserine" evidence="4">
    <location>
        <position position="44"/>
    </location>
</feature>
<feature type="sequence variant" id="VAR_057270" description="In dbSNP:rs34421776.">
    <original>R</original>
    <variation>C</variation>
    <location>
        <position position="5"/>
    </location>
</feature>
<feature type="sequence variant" id="VAR_087930" description="In HIJRS." evidence="3">
    <location>
        <begin position="87"/>
        <end position="159"/>
    </location>
</feature>
<feature type="sequence variant" id="VAR_087931" description="In HIJRS." evidence="3">
    <original>C</original>
    <variation>Y</variation>
    <location>
        <position position="90"/>
    </location>
</feature>
<feature type="sequence variant" id="VAR_087932" description="In HIJRS; uncertain significance." evidence="3">
    <original>D</original>
    <variation>N</variation>
    <location>
        <position position="116"/>
    </location>
</feature>
<feature type="sequence variant" id="VAR_087933" description="In HIJRS." evidence="3">
    <location>
        <begin position="149"/>
        <end position="159"/>
    </location>
</feature>
<feature type="mutagenesis site" description="Loss of transcriptional repression." evidence="4">
    <original>SS</original>
    <variation>AA</variation>
    <location>
        <begin position="38"/>
        <end position="39"/>
    </location>
</feature>
<feature type="mutagenesis site" description="No effect on transcriptional repression." evidence="4">
    <original>SS</original>
    <variation>AA</variation>
    <location>
        <begin position="43"/>
        <end position="44"/>
    </location>
</feature>
<feature type="sequence conflict" description="In Ref. 1; AAA60149 and 2; AAD17840." evidence="5" ref="1 2">
    <original>R</original>
    <variation>L</variation>
    <location>
        <position position="67"/>
    </location>
</feature>
<feature type="sequence conflict" description="In Ref. 1; AAA60149 and 2; AAD17840." evidence="5" ref="1 2">
    <location>
        <position position="71"/>
    </location>
</feature>
<feature type="sequence conflict" description="In Ref. 1; AAA60149 and 2; AAD17840." evidence="5" ref="1 2">
    <original>G</original>
    <variation>V</variation>
    <location>
        <position position="81"/>
    </location>
</feature>
<feature type="sequence conflict" description="In Ref. 1; AAA60149 and 2; AAD17840." evidence="5" ref="1 2">
    <original>K</original>
    <variation>N</variation>
    <location>
        <position position="96"/>
    </location>
</feature>
<feature type="sequence conflict" description="In Ref. 1; AAA60149 and 2; AAD17840." evidence="5" ref="1 2">
    <original>S</original>
    <variation>I</variation>
    <location>
        <position position="101"/>
    </location>
</feature>
<feature type="sequence conflict" description="In Ref. 1; AAA60149 and 2; AAD17840." evidence="5" ref="1 2">
    <original>K</original>
    <variation>R</variation>
    <location>
        <position position="150"/>
    </location>
</feature>
<feature type="sequence conflict" description="In Ref. 1; AAA60149 and 2; AAD17840." evidence="5" ref="1 2">
    <original>SR</original>
    <variation>GG</variation>
    <location>
        <begin position="154"/>
        <end position="155"/>
    </location>
</feature>
<gene>
    <name evidence="6" type="primary">TCEAL1</name>
    <name type="synonym">SIIR</name>
</gene>
<sequence length="159" mass="18641">MDKPRKENEEEPQSAPKTDEERPPVEHSPEKQSPEEQSSEEQSSEEEFFPEELLPELLPEMLLSEERPPQEGLSRKDLFEGRPPMEQPPCGVGKHKLEEGSFKERLARSRPQFRGDIHGRNLSNEEMIQAADELEEMKRVRNKLMIMHWKAKRSRPYPI</sequence>
<reference key="1">
    <citation type="journal article" date="1994" name="Gene">
        <title>A HeLa-cell-encoded p21 is homologous to transcription elongation factor SII.</title>
        <authorList>
            <person name="Yeh C.-H."/>
            <person name="Shatkin A.J."/>
        </authorList>
    </citation>
    <scope>NUCLEOTIDE SEQUENCE [MRNA]</scope>
</reference>
<reference key="2">
    <citation type="journal article" date="1999" name="Genomics">
        <title>Genomic structure and chromosomal localization of TCEAL1, a human gene encoding the nuclear phosphoprotein p21/SIIR.</title>
        <authorList>
            <person name="Pillutla R.C."/>
            <person name="Shimamoto A."/>
            <person name="Furuichi Y."/>
            <person name="Shatkin A.J."/>
        </authorList>
    </citation>
    <scope>NUCLEOTIDE SEQUENCE [GENOMIC DNA]</scope>
    <scope>TISSUE SPECIFICITY</scope>
    <source>
        <tissue>Placenta</tissue>
    </source>
</reference>
<reference key="3">
    <citation type="journal article" date="2005" name="Nature">
        <title>The DNA sequence of the human X chromosome.</title>
        <authorList>
            <person name="Ross M.T."/>
            <person name="Grafham D.V."/>
            <person name="Coffey A.J."/>
            <person name="Scherer S."/>
            <person name="McLay K."/>
            <person name="Muzny D."/>
            <person name="Platzer M."/>
            <person name="Howell G.R."/>
            <person name="Burrows C."/>
            <person name="Bird C.P."/>
            <person name="Frankish A."/>
            <person name="Lovell F.L."/>
            <person name="Howe K.L."/>
            <person name="Ashurst J.L."/>
            <person name="Fulton R.S."/>
            <person name="Sudbrak R."/>
            <person name="Wen G."/>
            <person name="Jones M.C."/>
            <person name="Hurles M.E."/>
            <person name="Andrews T.D."/>
            <person name="Scott C.E."/>
            <person name="Searle S."/>
            <person name="Ramser J."/>
            <person name="Whittaker A."/>
            <person name="Deadman R."/>
            <person name="Carter N.P."/>
            <person name="Hunt S.E."/>
            <person name="Chen R."/>
            <person name="Cree A."/>
            <person name="Gunaratne P."/>
            <person name="Havlak P."/>
            <person name="Hodgson A."/>
            <person name="Metzker M.L."/>
            <person name="Richards S."/>
            <person name="Scott G."/>
            <person name="Steffen D."/>
            <person name="Sodergren E."/>
            <person name="Wheeler D.A."/>
            <person name="Worley K.C."/>
            <person name="Ainscough R."/>
            <person name="Ambrose K.D."/>
            <person name="Ansari-Lari M.A."/>
            <person name="Aradhya S."/>
            <person name="Ashwell R.I."/>
            <person name="Babbage A.K."/>
            <person name="Bagguley C.L."/>
            <person name="Ballabio A."/>
            <person name="Banerjee R."/>
            <person name="Barker G.E."/>
            <person name="Barlow K.F."/>
            <person name="Barrett I.P."/>
            <person name="Bates K.N."/>
            <person name="Beare D.M."/>
            <person name="Beasley H."/>
            <person name="Beasley O."/>
            <person name="Beck A."/>
            <person name="Bethel G."/>
            <person name="Blechschmidt K."/>
            <person name="Brady N."/>
            <person name="Bray-Allen S."/>
            <person name="Bridgeman A.M."/>
            <person name="Brown A.J."/>
            <person name="Brown M.J."/>
            <person name="Bonnin D."/>
            <person name="Bruford E.A."/>
            <person name="Buhay C."/>
            <person name="Burch P."/>
            <person name="Burford D."/>
            <person name="Burgess J."/>
            <person name="Burrill W."/>
            <person name="Burton J."/>
            <person name="Bye J.M."/>
            <person name="Carder C."/>
            <person name="Carrel L."/>
            <person name="Chako J."/>
            <person name="Chapman J.C."/>
            <person name="Chavez D."/>
            <person name="Chen E."/>
            <person name="Chen G."/>
            <person name="Chen Y."/>
            <person name="Chen Z."/>
            <person name="Chinault C."/>
            <person name="Ciccodicola A."/>
            <person name="Clark S.Y."/>
            <person name="Clarke G."/>
            <person name="Clee C.M."/>
            <person name="Clegg S."/>
            <person name="Clerc-Blankenburg K."/>
            <person name="Clifford K."/>
            <person name="Cobley V."/>
            <person name="Cole C.G."/>
            <person name="Conquer J.S."/>
            <person name="Corby N."/>
            <person name="Connor R.E."/>
            <person name="David R."/>
            <person name="Davies J."/>
            <person name="Davis C."/>
            <person name="Davis J."/>
            <person name="Delgado O."/>
            <person name="Deshazo D."/>
            <person name="Dhami P."/>
            <person name="Ding Y."/>
            <person name="Dinh H."/>
            <person name="Dodsworth S."/>
            <person name="Draper H."/>
            <person name="Dugan-Rocha S."/>
            <person name="Dunham A."/>
            <person name="Dunn M."/>
            <person name="Durbin K.J."/>
            <person name="Dutta I."/>
            <person name="Eades T."/>
            <person name="Ellwood M."/>
            <person name="Emery-Cohen A."/>
            <person name="Errington H."/>
            <person name="Evans K.L."/>
            <person name="Faulkner L."/>
            <person name="Francis F."/>
            <person name="Frankland J."/>
            <person name="Fraser A.E."/>
            <person name="Galgoczy P."/>
            <person name="Gilbert J."/>
            <person name="Gill R."/>
            <person name="Gloeckner G."/>
            <person name="Gregory S.G."/>
            <person name="Gribble S."/>
            <person name="Griffiths C."/>
            <person name="Grocock R."/>
            <person name="Gu Y."/>
            <person name="Gwilliam R."/>
            <person name="Hamilton C."/>
            <person name="Hart E.A."/>
            <person name="Hawes A."/>
            <person name="Heath P.D."/>
            <person name="Heitmann K."/>
            <person name="Hennig S."/>
            <person name="Hernandez J."/>
            <person name="Hinzmann B."/>
            <person name="Ho S."/>
            <person name="Hoffs M."/>
            <person name="Howden P.J."/>
            <person name="Huckle E.J."/>
            <person name="Hume J."/>
            <person name="Hunt P.J."/>
            <person name="Hunt A.R."/>
            <person name="Isherwood J."/>
            <person name="Jacob L."/>
            <person name="Johnson D."/>
            <person name="Jones S."/>
            <person name="de Jong P.J."/>
            <person name="Joseph S.S."/>
            <person name="Keenan S."/>
            <person name="Kelly S."/>
            <person name="Kershaw J.K."/>
            <person name="Khan Z."/>
            <person name="Kioschis P."/>
            <person name="Klages S."/>
            <person name="Knights A.J."/>
            <person name="Kosiura A."/>
            <person name="Kovar-Smith C."/>
            <person name="Laird G.K."/>
            <person name="Langford C."/>
            <person name="Lawlor S."/>
            <person name="Leversha M."/>
            <person name="Lewis L."/>
            <person name="Liu W."/>
            <person name="Lloyd C."/>
            <person name="Lloyd D.M."/>
            <person name="Loulseged H."/>
            <person name="Loveland J.E."/>
            <person name="Lovell J.D."/>
            <person name="Lozado R."/>
            <person name="Lu J."/>
            <person name="Lyne R."/>
            <person name="Ma J."/>
            <person name="Maheshwari M."/>
            <person name="Matthews L.H."/>
            <person name="McDowall J."/>
            <person name="McLaren S."/>
            <person name="McMurray A."/>
            <person name="Meidl P."/>
            <person name="Meitinger T."/>
            <person name="Milne S."/>
            <person name="Miner G."/>
            <person name="Mistry S.L."/>
            <person name="Morgan M."/>
            <person name="Morris S."/>
            <person name="Mueller I."/>
            <person name="Mullikin J.C."/>
            <person name="Nguyen N."/>
            <person name="Nordsiek G."/>
            <person name="Nyakatura G."/>
            <person name="O'dell C.N."/>
            <person name="Okwuonu G."/>
            <person name="Palmer S."/>
            <person name="Pandian R."/>
            <person name="Parker D."/>
            <person name="Parrish J."/>
            <person name="Pasternak S."/>
            <person name="Patel D."/>
            <person name="Pearce A.V."/>
            <person name="Pearson D.M."/>
            <person name="Pelan S.E."/>
            <person name="Perez L."/>
            <person name="Porter K.M."/>
            <person name="Ramsey Y."/>
            <person name="Reichwald K."/>
            <person name="Rhodes S."/>
            <person name="Ridler K.A."/>
            <person name="Schlessinger D."/>
            <person name="Schueler M.G."/>
            <person name="Sehra H.K."/>
            <person name="Shaw-Smith C."/>
            <person name="Shen H."/>
            <person name="Sheridan E.M."/>
            <person name="Shownkeen R."/>
            <person name="Skuce C.D."/>
            <person name="Smith M.L."/>
            <person name="Sotheran E.C."/>
            <person name="Steingruber H.E."/>
            <person name="Steward C.A."/>
            <person name="Storey R."/>
            <person name="Swann R.M."/>
            <person name="Swarbreck D."/>
            <person name="Tabor P.E."/>
            <person name="Taudien S."/>
            <person name="Taylor T."/>
            <person name="Teague B."/>
            <person name="Thomas K."/>
            <person name="Thorpe A."/>
            <person name="Timms K."/>
            <person name="Tracey A."/>
            <person name="Trevanion S."/>
            <person name="Tromans A.C."/>
            <person name="d'Urso M."/>
            <person name="Verduzco D."/>
            <person name="Villasana D."/>
            <person name="Waldron L."/>
            <person name="Wall M."/>
            <person name="Wang Q."/>
            <person name="Warren J."/>
            <person name="Warry G.L."/>
            <person name="Wei X."/>
            <person name="West A."/>
            <person name="Whitehead S.L."/>
            <person name="Whiteley M.N."/>
            <person name="Wilkinson J.E."/>
            <person name="Willey D.L."/>
            <person name="Williams G."/>
            <person name="Williams L."/>
            <person name="Williamson A."/>
            <person name="Williamson H."/>
            <person name="Wilming L."/>
            <person name="Woodmansey R.L."/>
            <person name="Wray P.W."/>
            <person name="Yen J."/>
            <person name="Zhang J."/>
            <person name="Zhou J."/>
            <person name="Zoghbi H."/>
            <person name="Zorilla S."/>
            <person name="Buck D."/>
            <person name="Reinhardt R."/>
            <person name="Poustka A."/>
            <person name="Rosenthal A."/>
            <person name="Lehrach H."/>
            <person name="Meindl A."/>
            <person name="Minx P.J."/>
            <person name="Hillier L.W."/>
            <person name="Willard H.F."/>
            <person name="Wilson R.K."/>
            <person name="Waterston R.H."/>
            <person name="Rice C.M."/>
            <person name="Vaudin M."/>
            <person name="Coulson A."/>
            <person name="Nelson D.L."/>
            <person name="Weinstock G."/>
            <person name="Sulston J.E."/>
            <person name="Durbin R.M."/>
            <person name="Hubbard T."/>
            <person name="Gibbs R.A."/>
            <person name="Beck S."/>
            <person name="Rogers J."/>
            <person name="Bentley D.R."/>
        </authorList>
    </citation>
    <scope>NUCLEOTIDE SEQUENCE [LARGE SCALE GENOMIC DNA]</scope>
</reference>
<reference key="4">
    <citation type="journal article" date="2004" name="Genome Res.">
        <title>The status, quality, and expansion of the NIH full-length cDNA project: the Mammalian Gene Collection (MGC).</title>
        <authorList>
            <consortium name="The MGC Project Team"/>
        </authorList>
    </citation>
    <scope>NUCLEOTIDE SEQUENCE [LARGE SCALE MRNA]</scope>
    <source>
        <tissue>Placenta</tissue>
    </source>
</reference>
<reference key="5">
    <citation type="journal article" date="1995" name="J. Biol. Chem.">
        <title>The Ser36-Ser37 pair in HeLa nuclear protein p21/SIIR mediates Ser/Thr phosphorylation and is essential for Rous sarcoma virus long terminal repeat repression.</title>
        <authorList>
            <person name="Yeh C.-H."/>
            <person name="Zong W.-X."/>
            <person name="Shatkin A.J."/>
        </authorList>
    </citation>
    <scope>PHOSPHORYLATION AT SER-33; SER-38; SER-39; SER-43 AND SER-44</scope>
    <scope>MUTAGENESIS OF 38-SER-SER-39 AND 43-SER-SER-44</scope>
</reference>
<reference key="6">
    <citation type="journal article" date="2010" name="Sci. Signal.">
        <title>Quantitative phosphoproteomics reveals widespread full phosphorylation site occupancy during mitosis.</title>
        <authorList>
            <person name="Olsen J.V."/>
            <person name="Vermeulen M."/>
            <person name="Santamaria A."/>
            <person name="Kumar C."/>
            <person name="Miller M.L."/>
            <person name="Jensen L.J."/>
            <person name="Gnad F."/>
            <person name="Cox J."/>
            <person name="Jensen T.S."/>
            <person name="Nigg E.A."/>
            <person name="Brunak S."/>
            <person name="Mann M."/>
        </authorList>
    </citation>
    <scope>PHOSPHORYLATION [LARGE SCALE ANALYSIS] AT SER-28</scope>
    <scope>IDENTIFICATION BY MASS SPECTROMETRY [LARGE SCALE ANALYSIS]</scope>
    <source>
        <tissue>Cervix carcinoma</tissue>
    </source>
</reference>
<reference key="7">
    <citation type="journal article" date="2011" name="BMC Syst. Biol.">
        <title>Initial characterization of the human central proteome.</title>
        <authorList>
            <person name="Burkard T.R."/>
            <person name="Planyavsky M."/>
            <person name="Kaupe I."/>
            <person name="Breitwieser F.P."/>
            <person name="Buerckstuemmer T."/>
            <person name="Bennett K.L."/>
            <person name="Superti-Furga G."/>
            <person name="Colinge J."/>
        </authorList>
    </citation>
    <scope>IDENTIFICATION BY MASS SPECTROMETRY [LARGE SCALE ANALYSIS]</scope>
</reference>
<reference key="8">
    <citation type="journal article" date="2022" name="Am. J. Hum. Genet.">
        <title>TCEAL1 loss-of-function results in an X-linked dominant neurodevelopmental syndrome and drives the neurological disease trait in Xq22.2 deletions.</title>
        <authorList>
            <person name="Hijazi H."/>
            <person name="Reis L.M."/>
            <person name="Pehlivan D."/>
            <person name="Bernstein J.A."/>
            <person name="Muriello M."/>
            <person name="Syverson E."/>
            <person name="Bonner D."/>
            <person name="Estiar M.A."/>
            <person name="Gan-Or Z."/>
            <person name="Rouleau G.A."/>
            <person name="Lyulcheva E."/>
            <person name="Greenhalgh L."/>
            <person name="Tessarech M."/>
            <person name="Colin E."/>
            <person name="Guichet A."/>
            <person name="Bonneau D."/>
            <person name="van Jaarsveld R.H."/>
            <person name="Lachmeijer A.M.A."/>
            <person name="Ruaud L."/>
            <person name="Levy J."/>
            <person name="Tabet A.C."/>
            <person name="Ploski R."/>
            <person name="Rydzanicz M."/>
            <person name="Kepczynski L."/>
            <person name="Polatynska K."/>
            <person name="Li Y."/>
            <person name="Fatih J.M."/>
            <person name="Marafi D."/>
            <person name="Rosenfeld J.A."/>
            <person name="Coban-Akdemir Z."/>
            <person name="Bi W."/>
            <person name="Gibbs R.A."/>
            <person name="Hobson G.M."/>
            <person name="Hunter J.V."/>
            <person name="Carvalho C.M.B."/>
            <person name="Posey J.E."/>
            <person name="Semina E.V."/>
            <person name="Lupski J.R."/>
        </authorList>
    </citation>
    <scope>VARIANTS HIJRS 87-GLN--ILE-159 DEL; TYR-90; ASN-116 AND 149-TRP--ILE-159 DEL</scope>
    <scope>INVOLVEMENT IN HIJRS</scope>
</reference>
<name>TCAL1_HUMAN</name>
<dbReference type="EMBL" id="M99701">
    <property type="protein sequence ID" value="AAA60149.1"/>
    <property type="status" value="ALT_FRAME"/>
    <property type="molecule type" value="mRNA"/>
</dbReference>
<dbReference type="EMBL" id="AF095906">
    <property type="protein sequence ID" value="AAD17840.1"/>
    <property type="status" value="ALT_FRAME"/>
    <property type="molecule type" value="Genomic_DNA"/>
</dbReference>
<dbReference type="EMBL" id="AL049610">
    <property type="status" value="NOT_ANNOTATED_CDS"/>
    <property type="molecule type" value="Genomic_DNA"/>
</dbReference>
<dbReference type="EMBL" id="BC000809">
    <property type="protein sequence ID" value="AAH00809.1"/>
    <property type="molecule type" value="mRNA"/>
</dbReference>
<dbReference type="CCDS" id="CCDS35358.1"/>
<dbReference type="PIR" id="I53785">
    <property type="entry name" value="I53785"/>
</dbReference>
<dbReference type="RefSeq" id="NP_001006640.1">
    <property type="nucleotide sequence ID" value="NM_001006639.2"/>
</dbReference>
<dbReference type="RefSeq" id="NP_001006641.1">
    <property type="nucleotide sequence ID" value="NM_001006640.2"/>
</dbReference>
<dbReference type="RefSeq" id="NP_004771.2">
    <property type="nucleotide sequence ID" value="NM_004780.3"/>
</dbReference>
<dbReference type="SMR" id="Q15170"/>
<dbReference type="BioGRID" id="114745">
    <property type="interactions" value="79"/>
</dbReference>
<dbReference type="FunCoup" id="Q15170">
    <property type="interactions" value="948"/>
</dbReference>
<dbReference type="IntAct" id="Q15170">
    <property type="interactions" value="62"/>
</dbReference>
<dbReference type="MINT" id="Q15170"/>
<dbReference type="STRING" id="9606.ENSP00000361708"/>
<dbReference type="iPTMnet" id="Q15170"/>
<dbReference type="PhosphoSitePlus" id="Q15170"/>
<dbReference type="BioMuta" id="TCEAL1"/>
<dbReference type="DMDM" id="108935936"/>
<dbReference type="jPOST" id="Q15170"/>
<dbReference type="MassIVE" id="Q15170"/>
<dbReference type="PeptideAtlas" id="Q15170"/>
<dbReference type="Pumba" id="Q15170"/>
<dbReference type="Antibodypedia" id="29090">
    <property type="antibodies" value="379 antibodies from 30 providers"/>
</dbReference>
<dbReference type="DNASU" id="9338"/>
<dbReference type="Ensembl" id="ENST00000372624.3">
    <property type="protein sequence ID" value="ENSP00000361707.3"/>
    <property type="gene ID" value="ENSG00000172465.14"/>
</dbReference>
<dbReference type="Ensembl" id="ENST00000372625.8">
    <property type="protein sequence ID" value="ENSP00000361708.3"/>
    <property type="gene ID" value="ENSG00000172465.14"/>
</dbReference>
<dbReference type="Ensembl" id="ENST00000372626.7">
    <property type="protein sequence ID" value="ENSP00000361709.3"/>
    <property type="gene ID" value="ENSG00000172465.14"/>
</dbReference>
<dbReference type="GeneID" id="9338"/>
<dbReference type="KEGG" id="hsa:9338"/>
<dbReference type="MANE-Select" id="ENST00000372625.8">
    <property type="protein sequence ID" value="ENSP00000361708.3"/>
    <property type="RefSeq nucleotide sequence ID" value="NM_004780.3"/>
    <property type="RefSeq protein sequence ID" value="NP_004771.2"/>
</dbReference>
<dbReference type="UCSC" id="uc004eks.4">
    <property type="organism name" value="human"/>
</dbReference>
<dbReference type="AGR" id="HGNC:11616"/>
<dbReference type="CTD" id="9338"/>
<dbReference type="DisGeNET" id="9338"/>
<dbReference type="GeneCards" id="TCEAL1"/>
<dbReference type="HGNC" id="HGNC:11616">
    <property type="gene designation" value="TCEAL1"/>
</dbReference>
<dbReference type="HPA" id="ENSG00000172465">
    <property type="expression patterns" value="Low tissue specificity"/>
</dbReference>
<dbReference type="MalaCards" id="TCEAL1"/>
<dbReference type="MIM" id="300237">
    <property type="type" value="gene"/>
</dbReference>
<dbReference type="MIM" id="301094">
    <property type="type" value="phenotype"/>
</dbReference>
<dbReference type="neXtProt" id="NX_Q15170"/>
<dbReference type="OpenTargets" id="ENSG00000172465"/>
<dbReference type="PharmGKB" id="PA36375"/>
<dbReference type="VEuPathDB" id="HostDB:ENSG00000172465"/>
<dbReference type="GeneTree" id="ENSGT00950000183164"/>
<dbReference type="HOGENOM" id="CLU_140430_0_0_1"/>
<dbReference type="InParanoid" id="Q15170"/>
<dbReference type="OMA" id="HWKAKRN"/>
<dbReference type="OrthoDB" id="9537246at2759"/>
<dbReference type="PAN-GO" id="Q15170">
    <property type="GO annotations" value="2 GO annotations based on evolutionary models"/>
</dbReference>
<dbReference type="PhylomeDB" id="Q15170"/>
<dbReference type="TreeFam" id="TF336871"/>
<dbReference type="PathwayCommons" id="Q15170"/>
<dbReference type="SignaLink" id="Q15170"/>
<dbReference type="BioGRID-ORCS" id="9338">
    <property type="hits" value="21 hits in 779 CRISPR screens"/>
</dbReference>
<dbReference type="ChiTaRS" id="TCEAL1">
    <property type="organism name" value="human"/>
</dbReference>
<dbReference type="GeneWiki" id="TCEAL1"/>
<dbReference type="GenomeRNAi" id="9338"/>
<dbReference type="Pharos" id="Q15170">
    <property type="development level" value="Tbio"/>
</dbReference>
<dbReference type="PRO" id="PR:Q15170"/>
<dbReference type="Proteomes" id="UP000005640">
    <property type="component" value="Chromosome X"/>
</dbReference>
<dbReference type="RNAct" id="Q15170">
    <property type="molecule type" value="protein"/>
</dbReference>
<dbReference type="GO" id="GO:0005654">
    <property type="term" value="C:nucleoplasm"/>
    <property type="evidence" value="ECO:0000314"/>
    <property type="project" value="HPA"/>
</dbReference>
<dbReference type="GO" id="GO:0005634">
    <property type="term" value="C:nucleus"/>
    <property type="evidence" value="ECO:0000314"/>
    <property type="project" value="GO_Central"/>
</dbReference>
<dbReference type="InterPro" id="IPR021156">
    <property type="entry name" value="TF_A-like/BEX"/>
</dbReference>
<dbReference type="Pfam" id="PF04538">
    <property type="entry name" value="BEX"/>
    <property type="match status" value="1"/>
</dbReference>
<proteinExistence type="evidence at protein level"/>
<keyword id="KW-0225">Disease variant</keyword>
<keyword id="KW-0991">Intellectual disability</keyword>
<keyword id="KW-0539">Nucleus</keyword>
<keyword id="KW-0597">Phosphoprotein</keyword>
<keyword id="KW-1267">Proteomics identification</keyword>
<keyword id="KW-1185">Reference proteome</keyword>
<keyword id="KW-0804">Transcription</keyword>
<keyword id="KW-0805">Transcription regulation</keyword>
<protein>
    <recommendedName>
        <fullName evidence="5">Transcription elongation factor A protein-like 1</fullName>
        <shortName>TCEA-like protein 1</shortName>
    </recommendedName>
    <alternativeName>
        <fullName>Nuclear phosphoprotein p21/SIIR</fullName>
    </alternativeName>
    <alternativeName>
        <fullName>Transcription elongation factor S-II protein-like 1</fullName>
    </alternativeName>
</protein>